<protein>
    <recommendedName>
        <fullName evidence="1">Trigger factor</fullName>
        <shortName evidence="1">TF</shortName>
        <ecNumber evidence="1">5.2.1.8</ecNumber>
    </recommendedName>
    <alternativeName>
        <fullName evidence="1">PPIase</fullName>
    </alternativeName>
</protein>
<organism>
    <name type="scientific">Methylorubrum extorquens (strain PA1)</name>
    <name type="common">Methylobacterium extorquens</name>
    <dbReference type="NCBI Taxonomy" id="419610"/>
    <lineage>
        <taxon>Bacteria</taxon>
        <taxon>Pseudomonadati</taxon>
        <taxon>Pseudomonadota</taxon>
        <taxon>Alphaproteobacteria</taxon>
        <taxon>Hyphomicrobiales</taxon>
        <taxon>Methylobacteriaceae</taxon>
        <taxon>Methylorubrum</taxon>
    </lineage>
</organism>
<gene>
    <name evidence="1" type="primary">tig</name>
    <name type="ordered locus">Mext_2415</name>
</gene>
<accession>A9W5F4</accession>
<evidence type="ECO:0000255" key="1">
    <source>
        <dbReference type="HAMAP-Rule" id="MF_00303"/>
    </source>
</evidence>
<evidence type="ECO:0000256" key="2">
    <source>
        <dbReference type="SAM" id="MobiDB-lite"/>
    </source>
</evidence>
<sequence>MQVTETTSEGLKREFQVLLPANELEDRLNTELSNIKGKVQIKGFRPGKVPVAHLRKVYGKSVMADVLQNAVNEANQQIVTDKGLRLALEPQIEFPKDEEQTIIERALDAKGDLAFKVKLEVLPSFELADLSDVSIKKLVLKPSDEEVNETLERMAKDSRSFEPREEGAEAQSGDRVTIDFVGRIDGTEFEGGKGEDVDLELGSNTFIPGFEDQLVGAKVGDSRLVKVAFPADYQAEQLAGKDAEFDVTVKAVAAPGETKIDDELAKRFGMDDLEKLKEAVSKAVGSDYEAQSRRKLKKELLDALDGKYAFDLPPSLVHQEFAAVWAQVEQDLKTRGKTFEDEGTTEEASQAEYRKIAERRVRLGLVLAQVGETADIKVSDDEVNQALFARIRQFPGQEKQVYDFYRNNPQALAELRAPLFEEKVVDHVLGQVQVVEEPVSKEALFAEDDEADAVTGGAATDEKPSESNNEAAADKAAG</sequence>
<name>TIG_METEP</name>
<comment type="function">
    <text evidence="1">Involved in protein export. Acts as a chaperone by maintaining the newly synthesized protein in an open conformation. Functions as a peptidyl-prolyl cis-trans isomerase.</text>
</comment>
<comment type="catalytic activity">
    <reaction evidence="1">
        <text>[protein]-peptidylproline (omega=180) = [protein]-peptidylproline (omega=0)</text>
        <dbReference type="Rhea" id="RHEA:16237"/>
        <dbReference type="Rhea" id="RHEA-COMP:10747"/>
        <dbReference type="Rhea" id="RHEA-COMP:10748"/>
        <dbReference type="ChEBI" id="CHEBI:83833"/>
        <dbReference type="ChEBI" id="CHEBI:83834"/>
        <dbReference type="EC" id="5.2.1.8"/>
    </reaction>
</comment>
<comment type="subcellular location">
    <subcellularLocation>
        <location>Cytoplasm</location>
    </subcellularLocation>
    <text evidence="1">About half TF is bound to the ribosome near the polypeptide exit tunnel while the other half is free in the cytoplasm.</text>
</comment>
<comment type="domain">
    <text evidence="1">Consists of 3 domains; the N-terminus binds the ribosome, the middle domain has PPIase activity, while the C-terminus has intrinsic chaperone activity on its own.</text>
</comment>
<comment type="similarity">
    <text evidence="1">Belongs to the FKBP-type PPIase family. Tig subfamily.</text>
</comment>
<proteinExistence type="inferred from homology"/>
<dbReference type="EC" id="5.2.1.8" evidence="1"/>
<dbReference type="EMBL" id="CP000908">
    <property type="protein sequence ID" value="ABY30810.1"/>
    <property type="molecule type" value="Genomic_DNA"/>
</dbReference>
<dbReference type="RefSeq" id="WP_012253842.1">
    <property type="nucleotide sequence ID" value="NC_010172.1"/>
</dbReference>
<dbReference type="SMR" id="A9W5F4"/>
<dbReference type="GeneID" id="72990086"/>
<dbReference type="KEGG" id="mex:Mext_2415"/>
<dbReference type="eggNOG" id="COG0544">
    <property type="taxonomic scope" value="Bacteria"/>
</dbReference>
<dbReference type="HOGENOM" id="CLU_033058_2_2_5"/>
<dbReference type="BioCyc" id="MEXT419610:MEXT_RS12170-MONOMER"/>
<dbReference type="GO" id="GO:0005737">
    <property type="term" value="C:cytoplasm"/>
    <property type="evidence" value="ECO:0007669"/>
    <property type="project" value="UniProtKB-SubCell"/>
</dbReference>
<dbReference type="GO" id="GO:0003755">
    <property type="term" value="F:peptidyl-prolyl cis-trans isomerase activity"/>
    <property type="evidence" value="ECO:0007669"/>
    <property type="project" value="UniProtKB-UniRule"/>
</dbReference>
<dbReference type="GO" id="GO:0044183">
    <property type="term" value="F:protein folding chaperone"/>
    <property type="evidence" value="ECO:0007669"/>
    <property type="project" value="TreeGrafter"/>
</dbReference>
<dbReference type="GO" id="GO:0043022">
    <property type="term" value="F:ribosome binding"/>
    <property type="evidence" value="ECO:0007669"/>
    <property type="project" value="TreeGrafter"/>
</dbReference>
<dbReference type="GO" id="GO:0051083">
    <property type="term" value="P:'de novo' cotranslational protein folding"/>
    <property type="evidence" value="ECO:0007669"/>
    <property type="project" value="TreeGrafter"/>
</dbReference>
<dbReference type="GO" id="GO:0051301">
    <property type="term" value="P:cell division"/>
    <property type="evidence" value="ECO:0007669"/>
    <property type="project" value="UniProtKB-KW"/>
</dbReference>
<dbReference type="GO" id="GO:0061077">
    <property type="term" value="P:chaperone-mediated protein folding"/>
    <property type="evidence" value="ECO:0007669"/>
    <property type="project" value="TreeGrafter"/>
</dbReference>
<dbReference type="GO" id="GO:0015031">
    <property type="term" value="P:protein transport"/>
    <property type="evidence" value="ECO:0007669"/>
    <property type="project" value="UniProtKB-UniRule"/>
</dbReference>
<dbReference type="GO" id="GO:0043335">
    <property type="term" value="P:protein unfolding"/>
    <property type="evidence" value="ECO:0007669"/>
    <property type="project" value="TreeGrafter"/>
</dbReference>
<dbReference type="FunFam" id="3.10.50.40:FF:000001">
    <property type="entry name" value="Trigger factor"/>
    <property type="match status" value="1"/>
</dbReference>
<dbReference type="Gene3D" id="3.10.50.40">
    <property type="match status" value="1"/>
</dbReference>
<dbReference type="Gene3D" id="3.30.70.1050">
    <property type="entry name" value="Trigger factor ribosome-binding domain"/>
    <property type="match status" value="1"/>
</dbReference>
<dbReference type="Gene3D" id="1.10.3120.10">
    <property type="entry name" value="Trigger factor, C-terminal domain"/>
    <property type="match status" value="1"/>
</dbReference>
<dbReference type="HAMAP" id="MF_00303">
    <property type="entry name" value="Trigger_factor_Tig"/>
    <property type="match status" value="1"/>
</dbReference>
<dbReference type="InterPro" id="IPR046357">
    <property type="entry name" value="PPIase_dom_sf"/>
</dbReference>
<dbReference type="InterPro" id="IPR001179">
    <property type="entry name" value="PPIase_FKBP_dom"/>
</dbReference>
<dbReference type="InterPro" id="IPR005215">
    <property type="entry name" value="Trig_fac"/>
</dbReference>
<dbReference type="InterPro" id="IPR008880">
    <property type="entry name" value="Trigger_fac_C"/>
</dbReference>
<dbReference type="InterPro" id="IPR037041">
    <property type="entry name" value="Trigger_fac_C_sf"/>
</dbReference>
<dbReference type="InterPro" id="IPR008881">
    <property type="entry name" value="Trigger_fac_ribosome-bd_bac"/>
</dbReference>
<dbReference type="InterPro" id="IPR036611">
    <property type="entry name" value="Trigger_fac_ribosome-bd_sf"/>
</dbReference>
<dbReference type="InterPro" id="IPR027304">
    <property type="entry name" value="Trigger_fact/SurA_dom_sf"/>
</dbReference>
<dbReference type="NCBIfam" id="TIGR00115">
    <property type="entry name" value="tig"/>
    <property type="match status" value="1"/>
</dbReference>
<dbReference type="PANTHER" id="PTHR30560">
    <property type="entry name" value="TRIGGER FACTOR CHAPERONE AND PEPTIDYL-PROLYL CIS/TRANS ISOMERASE"/>
    <property type="match status" value="1"/>
</dbReference>
<dbReference type="PANTHER" id="PTHR30560:SF3">
    <property type="entry name" value="TRIGGER FACTOR-LIKE PROTEIN TIG, CHLOROPLASTIC"/>
    <property type="match status" value="1"/>
</dbReference>
<dbReference type="Pfam" id="PF00254">
    <property type="entry name" value="FKBP_C"/>
    <property type="match status" value="1"/>
</dbReference>
<dbReference type="Pfam" id="PF05698">
    <property type="entry name" value="Trigger_C"/>
    <property type="match status" value="1"/>
</dbReference>
<dbReference type="Pfam" id="PF05697">
    <property type="entry name" value="Trigger_N"/>
    <property type="match status" value="1"/>
</dbReference>
<dbReference type="PIRSF" id="PIRSF003095">
    <property type="entry name" value="Trigger_factor"/>
    <property type="match status" value="1"/>
</dbReference>
<dbReference type="SUPFAM" id="SSF54534">
    <property type="entry name" value="FKBP-like"/>
    <property type="match status" value="1"/>
</dbReference>
<dbReference type="SUPFAM" id="SSF109998">
    <property type="entry name" value="Triger factor/SurA peptide-binding domain-like"/>
    <property type="match status" value="1"/>
</dbReference>
<dbReference type="SUPFAM" id="SSF102735">
    <property type="entry name" value="Trigger factor ribosome-binding domain"/>
    <property type="match status" value="1"/>
</dbReference>
<dbReference type="PROSITE" id="PS50059">
    <property type="entry name" value="FKBP_PPIASE"/>
    <property type="match status" value="1"/>
</dbReference>
<keyword id="KW-0131">Cell cycle</keyword>
<keyword id="KW-0132">Cell division</keyword>
<keyword id="KW-0143">Chaperone</keyword>
<keyword id="KW-0963">Cytoplasm</keyword>
<keyword id="KW-0413">Isomerase</keyword>
<keyword id="KW-0697">Rotamase</keyword>
<feature type="chain" id="PRO_1000115552" description="Trigger factor">
    <location>
        <begin position="1"/>
        <end position="478"/>
    </location>
</feature>
<feature type="domain" description="PPIase FKBP-type" evidence="1">
    <location>
        <begin position="173"/>
        <end position="258"/>
    </location>
</feature>
<feature type="region of interest" description="Disordered" evidence="2">
    <location>
        <begin position="154"/>
        <end position="173"/>
    </location>
</feature>
<feature type="region of interest" description="Disordered" evidence="2">
    <location>
        <begin position="441"/>
        <end position="478"/>
    </location>
</feature>
<feature type="compositionally biased region" description="Basic and acidic residues" evidence="2">
    <location>
        <begin position="154"/>
        <end position="167"/>
    </location>
</feature>
<reference key="1">
    <citation type="submission" date="2007-12" db="EMBL/GenBank/DDBJ databases">
        <title>Complete sequence of Methylobacterium extorquens PA1.</title>
        <authorList>
            <consortium name="US DOE Joint Genome Institute"/>
            <person name="Copeland A."/>
            <person name="Lucas S."/>
            <person name="Lapidus A."/>
            <person name="Barry K."/>
            <person name="Glavina del Rio T."/>
            <person name="Dalin E."/>
            <person name="Tice H."/>
            <person name="Pitluck S."/>
            <person name="Saunders E."/>
            <person name="Brettin T."/>
            <person name="Bruce D."/>
            <person name="Detter J.C."/>
            <person name="Han C."/>
            <person name="Schmutz J."/>
            <person name="Larimer F."/>
            <person name="Land M."/>
            <person name="Hauser L."/>
            <person name="Kyrpides N."/>
            <person name="Kim E."/>
            <person name="Marx C."/>
            <person name="Richardson P."/>
        </authorList>
    </citation>
    <scope>NUCLEOTIDE SEQUENCE [LARGE SCALE GENOMIC DNA]</scope>
    <source>
        <strain>PA1</strain>
    </source>
</reference>